<organism>
    <name type="scientific">Deinococcus radiodurans (strain ATCC 13939 / DSM 20539 / JCM 16871 / CCUG 27074 / LMG 4051 / NBRC 15346 / NCIMB 9279 / VKM B-1422 / R1)</name>
    <dbReference type="NCBI Taxonomy" id="243230"/>
    <lineage>
        <taxon>Bacteria</taxon>
        <taxon>Thermotogati</taxon>
        <taxon>Deinococcota</taxon>
        <taxon>Deinococci</taxon>
        <taxon>Deinococcales</taxon>
        <taxon>Deinococcaceae</taxon>
        <taxon>Deinococcus</taxon>
    </lineage>
</organism>
<name>EFP_DEIRA</name>
<reference key="1">
    <citation type="journal article" date="1999" name="Science">
        <title>Genome sequence of the radioresistant bacterium Deinococcus radiodurans R1.</title>
        <authorList>
            <person name="White O."/>
            <person name="Eisen J.A."/>
            <person name="Heidelberg J.F."/>
            <person name="Hickey E.K."/>
            <person name="Peterson J.D."/>
            <person name="Dodson R.J."/>
            <person name="Haft D.H."/>
            <person name="Gwinn M.L."/>
            <person name="Nelson W.C."/>
            <person name="Richardson D.L."/>
            <person name="Moffat K.S."/>
            <person name="Qin H."/>
            <person name="Jiang L."/>
            <person name="Pamphile W."/>
            <person name="Crosby M."/>
            <person name="Shen M."/>
            <person name="Vamathevan J.J."/>
            <person name="Lam P."/>
            <person name="McDonald L.A."/>
            <person name="Utterback T.R."/>
            <person name="Zalewski C."/>
            <person name="Makarova K.S."/>
            <person name="Aravind L."/>
            <person name="Daly M.J."/>
            <person name="Minton K.W."/>
            <person name="Fleischmann R.D."/>
            <person name="Ketchum K.A."/>
            <person name="Nelson K.E."/>
            <person name="Salzberg S.L."/>
            <person name="Smith H.O."/>
            <person name="Venter J.C."/>
            <person name="Fraser C.M."/>
        </authorList>
    </citation>
    <scope>NUCLEOTIDE SEQUENCE [LARGE SCALE GENOMIC DNA]</scope>
    <source>
        <strain>ATCC 13939 / DSM 20539 / JCM 16871 / CCUG 27074 / LMG 4051 / NBRC 15346 / NCIMB 9279 / VKM B-1422 / R1</strain>
    </source>
</reference>
<accession>Q9RY32</accession>
<feature type="chain" id="PRO_0000094242" description="Elongation factor P">
    <location>
        <begin position="1"/>
        <end position="185"/>
    </location>
</feature>
<comment type="function">
    <text evidence="1">Involved in peptide bond synthesis. Stimulates efficient translation and peptide-bond synthesis on native or reconstituted 70S ribosomes in vitro. Probably functions indirectly by altering the affinity of the ribosome for aminoacyl-tRNA, thus increasing their reactivity as acceptors for peptidyl transferase.</text>
</comment>
<comment type="pathway">
    <text evidence="1">Protein biosynthesis; polypeptide chain elongation.</text>
</comment>
<comment type="subcellular location">
    <subcellularLocation>
        <location evidence="1">Cytoplasm</location>
    </subcellularLocation>
</comment>
<comment type="similarity">
    <text evidence="1">Belongs to the elongation factor P family.</text>
</comment>
<dbReference type="EMBL" id="AE000513">
    <property type="protein sequence ID" value="AAF09709.1"/>
    <property type="molecule type" value="Genomic_DNA"/>
</dbReference>
<dbReference type="PIR" id="D75558">
    <property type="entry name" value="D75558"/>
</dbReference>
<dbReference type="RefSeq" id="NP_293845.1">
    <property type="nucleotide sequence ID" value="NC_001263.1"/>
</dbReference>
<dbReference type="RefSeq" id="WP_010886767.1">
    <property type="nucleotide sequence ID" value="NC_001263.1"/>
</dbReference>
<dbReference type="SMR" id="Q9RY32"/>
<dbReference type="FunCoup" id="Q9RY32">
    <property type="interactions" value="442"/>
</dbReference>
<dbReference type="STRING" id="243230.DR_0119"/>
<dbReference type="PaxDb" id="243230-DR_0119"/>
<dbReference type="EnsemblBacteria" id="AAF09709">
    <property type="protein sequence ID" value="AAF09709"/>
    <property type="gene ID" value="DR_0119"/>
</dbReference>
<dbReference type="GeneID" id="69516348"/>
<dbReference type="KEGG" id="dra:DR_0119"/>
<dbReference type="PATRIC" id="fig|243230.17.peg.283"/>
<dbReference type="eggNOG" id="COG0231">
    <property type="taxonomic scope" value="Bacteria"/>
</dbReference>
<dbReference type="HOGENOM" id="CLU_074944_0_1_0"/>
<dbReference type="InParanoid" id="Q9RY32"/>
<dbReference type="OrthoDB" id="9801844at2"/>
<dbReference type="UniPathway" id="UPA00345"/>
<dbReference type="Proteomes" id="UP000002524">
    <property type="component" value="Chromosome 1"/>
</dbReference>
<dbReference type="GO" id="GO:0005737">
    <property type="term" value="C:cytoplasm"/>
    <property type="evidence" value="ECO:0000318"/>
    <property type="project" value="GO_Central"/>
</dbReference>
<dbReference type="GO" id="GO:0003746">
    <property type="term" value="F:translation elongation factor activity"/>
    <property type="evidence" value="ECO:0000318"/>
    <property type="project" value="GO_Central"/>
</dbReference>
<dbReference type="GO" id="GO:0043043">
    <property type="term" value="P:peptide biosynthetic process"/>
    <property type="evidence" value="ECO:0007669"/>
    <property type="project" value="InterPro"/>
</dbReference>
<dbReference type="CDD" id="cd04470">
    <property type="entry name" value="S1_EF-P_repeat_1"/>
    <property type="match status" value="1"/>
</dbReference>
<dbReference type="CDD" id="cd05794">
    <property type="entry name" value="S1_EF-P_repeat_2"/>
    <property type="match status" value="1"/>
</dbReference>
<dbReference type="FunFam" id="2.30.30.30:FF:000003">
    <property type="entry name" value="Elongation factor P"/>
    <property type="match status" value="1"/>
</dbReference>
<dbReference type="FunFam" id="2.40.50.140:FF:000004">
    <property type="entry name" value="Elongation factor P"/>
    <property type="match status" value="1"/>
</dbReference>
<dbReference type="FunFam" id="2.40.50.140:FF:000009">
    <property type="entry name" value="Elongation factor P"/>
    <property type="match status" value="1"/>
</dbReference>
<dbReference type="Gene3D" id="2.30.30.30">
    <property type="match status" value="1"/>
</dbReference>
<dbReference type="Gene3D" id="2.40.50.140">
    <property type="entry name" value="Nucleic acid-binding proteins"/>
    <property type="match status" value="2"/>
</dbReference>
<dbReference type="HAMAP" id="MF_00141">
    <property type="entry name" value="EF_P"/>
    <property type="match status" value="1"/>
</dbReference>
<dbReference type="InterPro" id="IPR015365">
    <property type="entry name" value="Elong-fact-P_C"/>
</dbReference>
<dbReference type="InterPro" id="IPR012340">
    <property type="entry name" value="NA-bd_OB-fold"/>
</dbReference>
<dbReference type="InterPro" id="IPR014722">
    <property type="entry name" value="Rib_uL2_dom2"/>
</dbReference>
<dbReference type="InterPro" id="IPR020599">
    <property type="entry name" value="Transl_elong_fac_P/YeiP"/>
</dbReference>
<dbReference type="InterPro" id="IPR013185">
    <property type="entry name" value="Transl_elong_KOW-like"/>
</dbReference>
<dbReference type="InterPro" id="IPR001059">
    <property type="entry name" value="Transl_elong_P/YeiP_cen"/>
</dbReference>
<dbReference type="InterPro" id="IPR013852">
    <property type="entry name" value="Transl_elong_P/YeiP_CS"/>
</dbReference>
<dbReference type="InterPro" id="IPR011768">
    <property type="entry name" value="Transl_elongation_fac_P"/>
</dbReference>
<dbReference type="InterPro" id="IPR008991">
    <property type="entry name" value="Translation_prot_SH3-like_sf"/>
</dbReference>
<dbReference type="NCBIfam" id="TIGR00038">
    <property type="entry name" value="efp"/>
    <property type="match status" value="1"/>
</dbReference>
<dbReference type="NCBIfam" id="NF001810">
    <property type="entry name" value="PRK00529.1"/>
    <property type="match status" value="1"/>
</dbReference>
<dbReference type="PANTHER" id="PTHR30053">
    <property type="entry name" value="ELONGATION FACTOR P"/>
    <property type="match status" value="1"/>
</dbReference>
<dbReference type="PANTHER" id="PTHR30053:SF12">
    <property type="entry name" value="ELONGATION FACTOR P (EF-P) FAMILY PROTEIN"/>
    <property type="match status" value="1"/>
</dbReference>
<dbReference type="Pfam" id="PF01132">
    <property type="entry name" value="EFP"/>
    <property type="match status" value="1"/>
</dbReference>
<dbReference type="Pfam" id="PF08207">
    <property type="entry name" value="EFP_N"/>
    <property type="match status" value="1"/>
</dbReference>
<dbReference type="Pfam" id="PF09285">
    <property type="entry name" value="Elong-fact-P_C"/>
    <property type="match status" value="1"/>
</dbReference>
<dbReference type="PIRSF" id="PIRSF005901">
    <property type="entry name" value="EF-P"/>
    <property type="match status" value="1"/>
</dbReference>
<dbReference type="SMART" id="SM01185">
    <property type="entry name" value="EFP"/>
    <property type="match status" value="1"/>
</dbReference>
<dbReference type="SMART" id="SM00841">
    <property type="entry name" value="Elong-fact-P_C"/>
    <property type="match status" value="1"/>
</dbReference>
<dbReference type="SUPFAM" id="SSF50249">
    <property type="entry name" value="Nucleic acid-binding proteins"/>
    <property type="match status" value="2"/>
</dbReference>
<dbReference type="SUPFAM" id="SSF50104">
    <property type="entry name" value="Translation proteins SH3-like domain"/>
    <property type="match status" value="1"/>
</dbReference>
<dbReference type="PROSITE" id="PS01275">
    <property type="entry name" value="EFP"/>
    <property type="match status" value="1"/>
</dbReference>
<gene>
    <name evidence="1" type="primary">efp</name>
    <name type="ordered locus">DR_0119</name>
</gene>
<keyword id="KW-0963">Cytoplasm</keyword>
<keyword id="KW-0251">Elongation factor</keyword>
<keyword id="KW-0648">Protein biosynthesis</keyword>
<keyword id="KW-1185">Reference proteome</keyword>
<protein>
    <recommendedName>
        <fullName evidence="1">Elongation factor P</fullName>
        <shortName evidence="1">EF-P</shortName>
    </recommendedName>
</protein>
<evidence type="ECO:0000255" key="1">
    <source>
        <dbReference type="HAMAP-Rule" id="MF_00141"/>
    </source>
</evidence>
<proteinExistence type="inferred from homology"/>
<sequence length="185" mass="20475">MISVTELRNGTKVQMDGGLWECLDYSHLKMGRGGAKVVTKFRNMESGSIVDRTFNSTEKLQDIYVEGKKMQYLYPDGDDYVFMDMETFDQVHLGKNIVSDAAKFMKENTEVEVAMYGDKALSISLPNQVILKITQTDPGVRGDTVSGGTKPATLETGAVVQVPLFVEQGTDVKVDTRTGQYLSRA</sequence>